<gene>
    <name evidence="1" type="primary">prs</name>
    <name type="synonym">prsA</name>
    <name type="ordered locus">NMA1093</name>
</gene>
<protein>
    <recommendedName>
        <fullName evidence="1">Ribose-phosphate pyrophosphokinase</fullName>
        <shortName evidence="1">RPPK</shortName>
        <ecNumber evidence="1">2.7.6.1</ecNumber>
    </recommendedName>
    <alternativeName>
        <fullName evidence="1">5-phospho-D-ribosyl alpha-1-diphosphate synthase</fullName>
    </alternativeName>
    <alternativeName>
        <fullName evidence="1">Phosphoribosyl diphosphate synthase</fullName>
    </alternativeName>
    <alternativeName>
        <fullName evidence="1">Phosphoribosyl pyrophosphate synthase</fullName>
        <shortName evidence="1">P-Rib-PP synthase</shortName>
        <shortName evidence="1">PRPP synthase</shortName>
        <shortName evidence="1">PRPPase</shortName>
    </alternativeName>
</protein>
<accession>P65234</accession>
<accession>A1IRB8</accession>
<accession>Q9JQV4</accession>
<reference key="1">
    <citation type="journal article" date="2000" name="Nature">
        <title>Complete DNA sequence of a serogroup A strain of Neisseria meningitidis Z2491.</title>
        <authorList>
            <person name="Parkhill J."/>
            <person name="Achtman M."/>
            <person name="James K.D."/>
            <person name="Bentley S.D."/>
            <person name="Churcher C.M."/>
            <person name="Klee S.R."/>
            <person name="Morelli G."/>
            <person name="Basham D."/>
            <person name="Brown D."/>
            <person name="Chillingworth T."/>
            <person name="Davies R.M."/>
            <person name="Davis P."/>
            <person name="Devlin K."/>
            <person name="Feltwell T."/>
            <person name="Hamlin N."/>
            <person name="Holroyd S."/>
            <person name="Jagels K."/>
            <person name="Leather S."/>
            <person name="Moule S."/>
            <person name="Mungall K.L."/>
            <person name="Quail M.A."/>
            <person name="Rajandream M.A."/>
            <person name="Rutherford K.M."/>
            <person name="Simmonds M."/>
            <person name="Skelton J."/>
            <person name="Whitehead S."/>
            <person name="Spratt B.G."/>
            <person name="Barrell B.G."/>
        </authorList>
    </citation>
    <scope>NUCLEOTIDE SEQUENCE [LARGE SCALE GENOMIC DNA]</scope>
    <source>
        <strain>DSM 15465 / Z2491</strain>
    </source>
</reference>
<evidence type="ECO:0000255" key="1">
    <source>
        <dbReference type="HAMAP-Rule" id="MF_00583"/>
    </source>
</evidence>
<dbReference type="EC" id="2.7.6.1" evidence="1"/>
<dbReference type="EMBL" id="AL157959">
    <property type="protein sequence ID" value="CAM08304.1"/>
    <property type="molecule type" value="Genomic_DNA"/>
</dbReference>
<dbReference type="RefSeq" id="WP_002213870.1">
    <property type="nucleotide sequence ID" value="NC_003116.1"/>
</dbReference>
<dbReference type="SMR" id="P65234"/>
<dbReference type="EnsemblBacteria" id="CAM08304">
    <property type="protein sequence ID" value="CAM08304"/>
    <property type="gene ID" value="NMA1093"/>
</dbReference>
<dbReference type="KEGG" id="nma:NMA1093"/>
<dbReference type="HOGENOM" id="CLU_033546_2_0_4"/>
<dbReference type="UniPathway" id="UPA00087">
    <property type="reaction ID" value="UER00172"/>
</dbReference>
<dbReference type="Proteomes" id="UP000000626">
    <property type="component" value="Chromosome"/>
</dbReference>
<dbReference type="GO" id="GO:0005737">
    <property type="term" value="C:cytoplasm"/>
    <property type="evidence" value="ECO:0007669"/>
    <property type="project" value="UniProtKB-SubCell"/>
</dbReference>
<dbReference type="GO" id="GO:0002189">
    <property type="term" value="C:ribose phosphate diphosphokinase complex"/>
    <property type="evidence" value="ECO:0007669"/>
    <property type="project" value="TreeGrafter"/>
</dbReference>
<dbReference type="GO" id="GO:0005524">
    <property type="term" value="F:ATP binding"/>
    <property type="evidence" value="ECO:0007669"/>
    <property type="project" value="UniProtKB-KW"/>
</dbReference>
<dbReference type="GO" id="GO:0016301">
    <property type="term" value="F:kinase activity"/>
    <property type="evidence" value="ECO:0007669"/>
    <property type="project" value="UniProtKB-KW"/>
</dbReference>
<dbReference type="GO" id="GO:0000287">
    <property type="term" value="F:magnesium ion binding"/>
    <property type="evidence" value="ECO:0007669"/>
    <property type="project" value="UniProtKB-UniRule"/>
</dbReference>
<dbReference type="GO" id="GO:0004749">
    <property type="term" value="F:ribose phosphate diphosphokinase activity"/>
    <property type="evidence" value="ECO:0007669"/>
    <property type="project" value="UniProtKB-UniRule"/>
</dbReference>
<dbReference type="GO" id="GO:0006015">
    <property type="term" value="P:5-phosphoribose 1-diphosphate biosynthetic process"/>
    <property type="evidence" value="ECO:0007669"/>
    <property type="project" value="UniProtKB-UniRule"/>
</dbReference>
<dbReference type="GO" id="GO:0006164">
    <property type="term" value="P:purine nucleotide biosynthetic process"/>
    <property type="evidence" value="ECO:0007669"/>
    <property type="project" value="TreeGrafter"/>
</dbReference>
<dbReference type="GO" id="GO:0009156">
    <property type="term" value="P:ribonucleoside monophosphate biosynthetic process"/>
    <property type="evidence" value="ECO:0007669"/>
    <property type="project" value="InterPro"/>
</dbReference>
<dbReference type="CDD" id="cd06223">
    <property type="entry name" value="PRTases_typeI"/>
    <property type="match status" value="1"/>
</dbReference>
<dbReference type="FunFam" id="3.40.50.2020:FF:000001">
    <property type="entry name" value="Ribose-phosphate pyrophosphokinase"/>
    <property type="match status" value="1"/>
</dbReference>
<dbReference type="Gene3D" id="3.40.50.2020">
    <property type="match status" value="2"/>
</dbReference>
<dbReference type="HAMAP" id="MF_00583_B">
    <property type="entry name" value="RibP_PPkinase_B"/>
    <property type="match status" value="1"/>
</dbReference>
<dbReference type="InterPro" id="IPR000842">
    <property type="entry name" value="PRib_PP_synth_CS"/>
</dbReference>
<dbReference type="InterPro" id="IPR029099">
    <property type="entry name" value="Pribosyltran_N"/>
</dbReference>
<dbReference type="InterPro" id="IPR000836">
    <property type="entry name" value="PRibTrfase_dom"/>
</dbReference>
<dbReference type="InterPro" id="IPR029057">
    <property type="entry name" value="PRTase-like"/>
</dbReference>
<dbReference type="InterPro" id="IPR005946">
    <property type="entry name" value="Rib-P_diPkinase"/>
</dbReference>
<dbReference type="InterPro" id="IPR037515">
    <property type="entry name" value="Rib-P_diPkinase_bac"/>
</dbReference>
<dbReference type="NCBIfam" id="NF002320">
    <property type="entry name" value="PRK01259.1"/>
    <property type="match status" value="1"/>
</dbReference>
<dbReference type="NCBIfam" id="TIGR01251">
    <property type="entry name" value="ribP_PPkin"/>
    <property type="match status" value="1"/>
</dbReference>
<dbReference type="PANTHER" id="PTHR10210">
    <property type="entry name" value="RIBOSE-PHOSPHATE DIPHOSPHOKINASE FAMILY MEMBER"/>
    <property type="match status" value="1"/>
</dbReference>
<dbReference type="PANTHER" id="PTHR10210:SF41">
    <property type="entry name" value="RIBOSE-PHOSPHATE PYROPHOSPHOKINASE 1, CHLOROPLASTIC"/>
    <property type="match status" value="1"/>
</dbReference>
<dbReference type="Pfam" id="PF14572">
    <property type="entry name" value="Pribosyl_synth"/>
    <property type="match status" value="1"/>
</dbReference>
<dbReference type="Pfam" id="PF13793">
    <property type="entry name" value="Pribosyltran_N"/>
    <property type="match status" value="1"/>
</dbReference>
<dbReference type="SMART" id="SM01400">
    <property type="entry name" value="Pribosyltran_N"/>
    <property type="match status" value="1"/>
</dbReference>
<dbReference type="SUPFAM" id="SSF53271">
    <property type="entry name" value="PRTase-like"/>
    <property type="match status" value="1"/>
</dbReference>
<dbReference type="PROSITE" id="PS00114">
    <property type="entry name" value="PRPP_SYNTHASE"/>
    <property type="match status" value="1"/>
</dbReference>
<organism>
    <name type="scientific">Neisseria meningitidis serogroup A / serotype 4A (strain DSM 15465 / Z2491)</name>
    <dbReference type="NCBI Taxonomy" id="122587"/>
    <lineage>
        <taxon>Bacteria</taxon>
        <taxon>Pseudomonadati</taxon>
        <taxon>Pseudomonadota</taxon>
        <taxon>Betaproteobacteria</taxon>
        <taxon>Neisseriales</taxon>
        <taxon>Neisseriaceae</taxon>
        <taxon>Neisseria</taxon>
    </lineage>
</organism>
<name>KPRS_NEIMA</name>
<keyword id="KW-0067">ATP-binding</keyword>
<keyword id="KW-0963">Cytoplasm</keyword>
<keyword id="KW-0418">Kinase</keyword>
<keyword id="KW-0460">Magnesium</keyword>
<keyword id="KW-0479">Metal-binding</keyword>
<keyword id="KW-0545">Nucleotide biosynthesis</keyword>
<keyword id="KW-0547">Nucleotide-binding</keyword>
<keyword id="KW-0808">Transferase</keyword>
<proteinExistence type="inferred from homology"/>
<feature type="chain" id="PRO_0000141166" description="Ribose-phosphate pyrophosphokinase">
    <location>
        <begin position="1"/>
        <end position="327"/>
    </location>
</feature>
<feature type="active site" evidence="1">
    <location>
        <position position="196"/>
    </location>
</feature>
<feature type="binding site" evidence="1">
    <location>
        <begin position="40"/>
        <end position="42"/>
    </location>
    <ligand>
        <name>ATP</name>
        <dbReference type="ChEBI" id="CHEBI:30616"/>
    </ligand>
</feature>
<feature type="binding site" evidence="1">
    <location>
        <begin position="99"/>
        <end position="100"/>
    </location>
    <ligand>
        <name>ATP</name>
        <dbReference type="ChEBI" id="CHEBI:30616"/>
    </ligand>
</feature>
<feature type="binding site" evidence="1">
    <location>
        <position position="134"/>
    </location>
    <ligand>
        <name>Mg(2+)</name>
        <dbReference type="ChEBI" id="CHEBI:18420"/>
        <label>1</label>
    </ligand>
</feature>
<feature type="binding site" evidence="1">
    <location>
        <position position="173"/>
    </location>
    <ligand>
        <name>Mg(2+)</name>
        <dbReference type="ChEBI" id="CHEBI:18420"/>
        <label>2</label>
    </ligand>
</feature>
<feature type="binding site" evidence="1">
    <location>
        <position position="198"/>
    </location>
    <ligand>
        <name>D-ribose 5-phosphate</name>
        <dbReference type="ChEBI" id="CHEBI:78346"/>
    </ligand>
</feature>
<feature type="binding site" evidence="1">
    <location>
        <position position="222"/>
    </location>
    <ligand>
        <name>D-ribose 5-phosphate</name>
        <dbReference type="ChEBI" id="CHEBI:78346"/>
    </ligand>
</feature>
<feature type="binding site" evidence="1">
    <location>
        <begin position="226"/>
        <end position="230"/>
    </location>
    <ligand>
        <name>D-ribose 5-phosphate</name>
        <dbReference type="ChEBI" id="CHEBI:78346"/>
    </ligand>
</feature>
<comment type="function">
    <text evidence="1">Involved in the biosynthesis of the central metabolite phospho-alpha-D-ribosyl-1-pyrophosphate (PRPP) via the transfer of pyrophosphoryl group from ATP to 1-hydroxyl of ribose-5-phosphate (Rib-5-P).</text>
</comment>
<comment type="catalytic activity">
    <reaction evidence="1">
        <text>D-ribose 5-phosphate + ATP = 5-phospho-alpha-D-ribose 1-diphosphate + AMP + H(+)</text>
        <dbReference type="Rhea" id="RHEA:15609"/>
        <dbReference type="ChEBI" id="CHEBI:15378"/>
        <dbReference type="ChEBI" id="CHEBI:30616"/>
        <dbReference type="ChEBI" id="CHEBI:58017"/>
        <dbReference type="ChEBI" id="CHEBI:78346"/>
        <dbReference type="ChEBI" id="CHEBI:456215"/>
        <dbReference type="EC" id="2.7.6.1"/>
    </reaction>
</comment>
<comment type="cofactor">
    <cofactor evidence="1">
        <name>Mg(2+)</name>
        <dbReference type="ChEBI" id="CHEBI:18420"/>
    </cofactor>
    <text evidence="1">Binds 2 Mg(2+) ions per subunit.</text>
</comment>
<comment type="pathway">
    <text evidence="1">Metabolic intermediate biosynthesis; 5-phospho-alpha-D-ribose 1-diphosphate biosynthesis; 5-phospho-alpha-D-ribose 1-diphosphate from D-ribose 5-phosphate (route I): step 1/1.</text>
</comment>
<comment type="subunit">
    <text evidence="1">Homohexamer.</text>
</comment>
<comment type="subcellular location">
    <subcellularLocation>
        <location evidence="1">Cytoplasm</location>
    </subcellularLocation>
</comment>
<comment type="similarity">
    <text evidence="1">Belongs to the ribose-phosphate pyrophosphokinase family. Class I subfamily.</text>
</comment>
<sequence>MAAYDSLMVFTGNANPELAQRVVRHLDISLGNASVSKFSDGEVAVELLENVRGRDVFILQPTCAPTNDNLMEILTMADALKRASAGRITTAIPYFGYARQDRRPRSVRVPISAKLVANMLYSAGIDRVLTVDLHADQIQGFFDIPVDNIYATPILLNDIKQQRIENLTVVSPDIGGVVRARAVAKSLNADLAIIDKRRPKANVAEVMNIIGDIQGRTCLIVDDMIDTANTLCKAAVALKERGAERVLAYASHAVFSGEAVSRIASSEIDQVVVTDTIPLSEAAKNCDRIRQVTIAGLLAETVRRISNEESVSYLFNEEVMTGSMLLP</sequence>